<feature type="chain" id="PRO_0000366194" description="Bublin coiled-coil protein">
    <location>
        <begin position="1"/>
        <end position="99"/>
    </location>
</feature>
<feature type="region of interest" description="Disordered" evidence="4">
    <location>
        <begin position="66"/>
        <end position="99"/>
    </location>
</feature>
<feature type="coiled-coil region" evidence="3">
    <location>
        <begin position="34"/>
        <end position="71"/>
    </location>
</feature>
<feature type="compositionally biased region" description="Basic and acidic residues" evidence="4">
    <location>
        <begin position="66"/>
        <end position="78"/>
    </location>
</feature>
<accession>P0C8Y3</accession>
<gene>
    <name type="primary">bbln</name>
</gene>
<comment type="function">
    <text evidence="1">Essential for intermediate filament organization in intestinal cells, interacts with intermediate filament and regulates intestinal lumen morphology.</text>
</comment>
<comment type="subcellular location">
    <subcellularLocation>
        <location evidence="2">Cell junction</location>
    </subcellularLocation>
    <subcellularLocation>
        <location evidence="2">Cytoplasm</location>
        <location evidence="2">Cytoskeleton</location>
    </subcellularLocation>
    <text evidence="2">In the intestine, localizes subapically and at cell junctions. Interacts with intermediate filament (IF) proteins and localizes to the IF network in an IF-dependent manner. In dividing cells, localizes to interpolar and kinetochore microtubules.</text>
</comment>
<comment type="similarity">
    <text evidence="5">Belongs to the UPF0184 (EST00098) family.</text>
</comment>
<keyword id="KW-0965">Cell junction</keyword>
<keyword id="KW-0175">Coiled coil</keyword>
<keyword id="KW-0963">Cytoplasm</keyword>
<keyword id="KW-0206">Cytoskeleton</keyword>
<keyword id="KW-1185">Reference proteome</keyword>
<sequence length="99" mass="11179">MSGPNGDPDISAEGIIEDEDEFNEEEYAAIDSMLDQINSCLDDIEERNDALNGKLQELLESNRAARRDFRQQITDHADLPPPANDDDEDEQSRDAQKKD</sequence>
<organism>
    <name type="scientific">Danio rerio</name>
    <name type="common">Zebrafish</name>
    <name type="synonym">Brachydanio rerio</name>
    <dbReference type="NCBI Taxonomy" id="7955"/>
    <lineage>
        <taxon>Eukaryota</taxon>
        <taxon>Metazoa</taxon>
        <taxon>Chordata</taxon>
        <taxon>Craniata</taxon>
        <taxon>Vertebrata</taxon>
        <taxon>Euteleostomi</taxon>
        <taxon>Actinopterygii</taxon>
        <taxon>Neopterygii</taxon>
        <taxon>Teleostei</taxon>
        <taxon>Ostariophysi</taxon>
        <taxon>Cypriniformes</taxon>
        <taxon>Danionidae</taxon>
        <taxon>Danioninae</taxon>
        <taxon>Danio</taxon>
    </lineage>
</organism>
<evidence type="ECO:0000250" key="1">
    <source>
        <dbReference type="UniProtKB" id="Q18012"/>
    </source>
</evidence>
<evidence type="ECO:0000250" key="2">
    <source>
        <dbReference type="UniProtKB" id="Q9BUW7"/>
    </source>
</evidence>
<evidence type="ECO:0000255" key="3"/>
<evidence type="ECO:0000256" key="4">
    <source>
        <dbReference type="SAM" id="MobiDB-lite"/>
    </source>
</evidence>
<evidence type="ECO:0000305" key="5"/>
<protein>
    <recommendedName>
        <fullName evidence="2">Bublin coiled-coil protein</fullName>
    </recommendedName>
    <alternativeName>
        <fullName>UPF0184 protein C9orf16 homolog</fullName>
    </alternativeName>
</protein>
<dbReference type="EMBL" id="BC139872">
    <property type="status" value="NOT_ANNOTATED_CDS"/>
    <property type="molecule type" value="mRNA"/>
</dbReference>
<dbReference type="SMR" id="P0C8Y3"/>
<dbReference type="FunCoup" id="P0C8Y3">
    <property type="interactions" value="2175"/>
</dbReference>
<dbReference type="STRING" id="7955.ENSDARP00000109078"/>
<dbReference type="PaxDb" id="7955-ENSDARP00000109078"/>
<dbReference type="eggNOG" id="ENOG502SAFB">
    <property type="taxonomic scope" value="Eukaryota"/>
</dbReference>
<dbReference type="InParanoid" id="P0C8Y3"/>
<dbReference type="PhylomeDB" id="P0C8Y3"/>
<dbReference type="Proteomes" id="UP000000437">
    <property type="component" value="Unplaced"/>
</dbReference>
<dbReference type="GO" id="GO:0070161">
    <property type="term" value="C:anchoring junction"/>
    <property type="evidence" value="ECO:0007669"/>
    <property type="project" value="UniProtKB-SubCell"/>
</dbReference>
<dbReference type="GO" id="GO:0030054">
    <property type="term" value="C:cell junction"/>
    <property type="evidence" value="ECO:0000250"/>
    <property type="project" value="UniProtKB"/>
</dbReference>
<dbReference type="GO" id="GO:0005737">
    <property type="term" value="C:cytoplasm"/>
    <property type="evidence" value="ECO:0007669"/>
    <property type="project" value="UniProtKB-KW"/>
</dbReference>
<dbReference type="GO" id="GO:0005856">
    <property type="term" value="C:cytoskeleton"/>
    <property type="evidence" value="ECO:0007669"/>
    <property type="project" value="UniProtKB-SubCell"/>
</dbReference>
<dbReference type="GO" id="GO:0120219">
    <property type="term" value="C:subapical part of cell"/>
    <property type="evidence" value="ECO:0000250"/>
    <property type="project" value="UniProtKB"/>
</dbReference>
<dbReference type="GO" id="GO:0060090">
    <property type="term" value="F:molecular adaptor activity"/>
    <property type="evidence" value="ECO:0000250"/>
    <property type="project" value="UniProtKB"/>
</dbReference>
<dbReference type="GO" id="GO:0045110">
    <property type="term" value="P:intermediate filament bundle assembly"/>
    <property type="evidence" value="ECO:0000250"/>
    <property type="project" value="UniProtKB"/>
</dbReference>
<dbReference type="InterPro" id="IPR005374">
    <property type="entry name" value="BBLN_eukaryota"/>
</dbReference>
<dbReference type="PANTHER" id="PTHR34344:SF1">
    <property type="entry name" value="BUBLIN COILED-COIL PROTEIN"/>
    <property type="match status" value="1"/>
</dbReference>
<dbReference type="PANTHER" id="PTHR34344">
    <property type="entry name" value="UPF0184 PROTEIN C9ORF16"/>
    <property type="match status" value="1"/>
</dbReference>
<dbReference type="Pfam" id="PF03670">
    <property type="entry name" value="UPF0184"/>
    <property type="match status" value="1"/>
</dbReference>
<name>BBLN_DANRE</name>
<proteinExistence type="inferred from homology"/>
<reference key="1">
    <citation type="submission" date="2007-04" db="EMBL/GenBank/DDBJ databases">
        <authorList>
            <consortium name="NIH - Zebrafish Gene Collection (ZGC) project"/>
        </authorList>
    </citation>
    <scope>NUCLEOTIDE SEQUENCE [LARGE SCALE MRNA]</scope>
    <source>
        <tissue>Embryo</tissue>
    </source>
</reference>